<keyword id="KW-0067">ATP-binding</keyword>
<keyword id="KW-0418">Kinase</keyword>
<keyword id="KW-0441">Lipid A biosynthesis</keyword>
<keyword id="KW-0444">Lipid biosynthesis</keyword>
<keyword id="KW-0443">Lipid metabolism</keyword>
<keyword id="KW-0547">Nucleotide-binding</keyword>
<keyword id="KW-0808">Transferase</keyword>
<protein>
    <recommendedName>
        <fullName evidence="1">Tetraacyldisaccharide 4'-kinase</fullName>
        <ecNumber evidence="1">2.7.1.130</ecNumber>
    </recommendedName>
    <alternativeName>
        <fullName evidence="1">Lipid A 4'-kinase</fullName>
    </alternativeName>
</protein>
<gene>
    <name evidence="1" type="primary">lpxK</name>
    <name type="ordered locus">NMC0621</name>
</gene>
<name>LPXK_NEIMF</name>
<comment type="function">
    <text evidence="1">Transfers the gamma-phosphate of ATP to the 4'-position of a tetraacyldisaccharide 1-phosphate intermediate (termed DS-1-P) to form tetraacyldisaccharide 1,4'-bis-phosphate (lipid IVA).</text>
</comment>
<comment type="catalytic activity">
    <reaction evidence="1">
        <text>a lipid A disaccharide + ATP = a lipid IVA + ADP + H(+)</text>
        <dbReference type="Rhea" id="RHEA:67840"/>
        <dbReference type="ChEBI" id="CHEBI:15378"/>
        <dbReference type="ChEBI" id="CHEBI:30616"/>
        <dbReference type="ChEBI" id="CHEBI:176343"/>
        <dbReference type="ChEBI" id="CHEBI:176425"/>
        <dbReference type="ChEBI" id="CHEBI:456216"/>
        <dbReference type="EC" id="2.7.1.130"/>
    </reaction>
</comment>
<comment type="pathway">
    <text evidence="1">Glycolipid biosynthesis; lipid IV(A) biosynthesis; lipid IV(A) from (3R)-3-hydroxytetradecanoyl-[acyl-carrier-protein] and UDP-N-acetyl-alpha-D-glucosamine: step 6/6.</text>
</comment>
<comment type="similarity">
    <text evidence="1">Belongs to the LpxK family.</text>
</comment>
<accession>A1KST3</accession>
<sequence length="344" mass="37024">MPNCFKFHTVIERHWQKPYPVLSFLLKPLSGLFAKIAAKRRTDFLSGKRQSEKLPVPVVVVGNIHAGGTGKTPIVAALVSGLQEKGVKVGIISRGYGRKSKAVHVLNAESRAEDAGDEPLLLFRKTGAPTAVGSSRAEAGRALLAAHPDIGLIVADDGLQHYALRRDVEIAVFPSADTGRTDLDLLPNGSLREPLLRLDSVDAVVVSGGKADALFRPSENMFHSRIEAGRIYRLNNPSEILDTGRLKNQTVVAVAGIAKPARFFDSLRNMGITVKRTVALPDHADISAADLPDADAVIITEKDAVKFSDGICTDNVWVLPVCAIIEPDLAAFVLERLEDVPKAV</sequence>
<proteinExistence type="inferred from homology"/>
<feature type="chain" id="PRO_0000291216" description="Tetraacyldisaccharide 4'-kinase">
    <location>
        <begin position="1"/>
        <end position="344"/>
    </location>
</feature>
<feature type="binding site" evidence="1">
    <location>
        <begin position="65"/>
        <end position="72"/>
    </location>
    <ligand>
        <name>ATP</name>
        <dbReference type="ChEBI" id="CHEBI:30616"/>
    </ligand>
</feature>
<evidence type="ECO:0000255" key="1">
    <source>
        <dbReference type="HAMAP-Rule" id="MF_00409"/>
    </source>
</evidence>
<reference key="1">
    <citation type="journal article" date="2007" name="PLoS Genet.">
        <title>Meningococcal genetic variation mechanisms viewed through comparative analysis of serogroup C strain FAM18.</title>
        <authorList>
            <person name="Bentley S.D."/>
            <person name="Vernikos G.S."/>
            <person name="Snyder L.A.S."/>
            <person name="Churcher C."/>
            <person name="Arrowsmith C."/>
            <person name="Chillingworth T."/>
            <person name="Cronin A."/>
            <person name="Davis P.H."/>
            <person name="Holroyd N.E."/>
            <person name="Jagels K."/>
            <person name="Maddison M."/>
            <person name="Moule S."/>
            <person name="Rabbinowitsch E."/>
            <person name="Sharp S."/>
            <person name="Unwin L."/>
            <person name="Whitehead S."/>
            <person name="Quail M.A."/>
            <person name="Achtman M."/>
            <person name="Barrell B.G."/>
            <person name="Saunders N.J."/>
            <person name="Parkhill J."/>
        </authorList>
    </citation>
    <scope>NUCLEOTIDE SEQUENCE [LARGE SCALE GENOMIC DNA]</scope>
    <source>
        <strain>ATCC 700532 / DSM 15464 / FAM18</strain>
    </source>
</reference>
<dbReference type="EC" id="2.7.1.130" evidence="1"/>
<dbReference type="EMBL" id="AM421808">
    <property type="protein sequence ID" value="CAM09914.1"/>
    <property type="molecule type" value="Genomic_DNA"/>
</dbReference>
<dbReference type="RefSeq" id="WP_002221287.1">
    <property type="nucleotide sequence ID" value="NC_008767.1"/>
</dbReference>
<dbReference type="SMR" id="A1KST3"/>
<dbReference type="KEGG" id="nmc:NMC0621"/>
<dbReference type="HOGENOM" id="CLU_038816_2_0_4"/>
<dbReference type="UniPathway" id="UPA00359">
    <property type="reaction ID" value="UER00482"/>
</dbReference>
<dbReference type="Proteomes" id="UP000002286">
    <property type="component" value="Chromosome"/>
</dbReference>
<dbReference type="GO" id="GO:0005886">
    <property type="term" value="C:plasma membrane"/>
    <property type="evidence" value="ECO:0007669"/>
    <property type="project" value="TreeGrafter"/>
</dbReference>
<dbReference type="GO" id="GO:0005524">
    <property type="term" value="F:ATP binding"/>
    <property type="evidence" value="ECO:0007669"/>
    <property type="project" value="UniProtKB-UniRule"/>
</dbReference>
<dbReference type="GO" id="GO:0009029">
    <property type="term" value="F:tetraacyldisaccharide 4'-kinase activity"/>
    <property type="evidence" value="ECO:0007669"/>
    <property type="project" value="UniProtKB-UniRule"/>
</dbReference>
<dbReference type="GO" id="GO:0009245">
    <property type="term" value="P:lipid A biosynthetic process"/>
    <property type="evidence" value="ECO:0007669"/>
    <property type="project" value="UniProtKB-UniRule"/>
</dbReference>
<dbReference type="GO" id="GO:0009244">
    <property type="term" value="P:lipopolysaccharide core region biosynthetic process"/>
    <property type="evidence" value="ECO:0007669"/>
    <property type="project" value="TreeGrafter"/>
</dbReference>
<dbReference type="HAMAP" id="MF_00409">
    <property type="entry name" value="LpxK"/>
    <property type="match status" value="1"/>
</dbReference>
<dbReference type="InterPro" id="IPR003758">
    <property type="entry name" value="LpxK"/>
</dbReference>
<dbReference type="InterPro" id="IPR027417">
    <property type="entry name" value="P-loop_NTPase"/>
</dbReference>
<dbReference type="NCBIfam" id="TIGR00682">
    <property type="entry name" value="lpxK"/>
    <property type="match status" value="1"/>
</dbReference>
<dbReference type="PANTHER" id="PTHR42724">
    <property type="entry name" value="TETRAACYLDISACCHARIDE 4'-KINASE"/>
    <property type="match status" value="1"/>
</dbReference>
<dbReference type="PANTHER" id="PTHR42724:SF1">
    <property type="entry name" value="TETRAACYLDISACCHARIDE 4'-KINASE, MITOCHONDRIAL-RELATED"/>
    <property type="match status" value="1"/>
</dbReference>
<dbReference type="Pfam" id="PF02606">
    <property type="entry name" value="LpxK"/>
    <property type="match status" value="1"/>
</dbReference>
<dbReference type="SUPFAM" id="SSF52540">
    <property type="entry name" value="P-loop containing nucleoside triphosphate hydrolases"/>
    <property type="match status" value="1"/>
</dbReference>
<organism>
    <name type="scientific">Neisseria meningitidis serogroup C / serotype 2a (strain ATCC 700532 / DSM 15464 / FAM18)</name>
    <dbReference type="NCBI Taxonomy" id="272831"/>
    <lineage>
        <taxon>Bacteria</taxon>
        <taxon>Pseudomonadati</taxon>
        <taxon>Pseudomonadota</taxon>
        <taxon>Betaproteobacteria</taxon>
        <taxon>Neisseriales</taxon>
        <taxon>Neisseriaceae</taxon>
        <taxon>Neisseria</taxon>
    </lineage>
</organism>